<reference key="1">
    <citation type="journal article" date="2007" name="PLoS ONE">
        <title>Molecular correlates of host specialization in Staphylococcus aureus.</title>
        <authorList>
            <person name="Herron-Olson L."/>
            <person name="Fitzgerald J.R."/>
            <person name="Musser J.M."/>
            <person name="Kapur V."/>
        </authorList>
    </citation>
    <scope>NUCLEOTIDE SEQUENCE [LARGE SCALE GENOMIC DNA]</scope>
    <source>
        <strain>bovine RF122 / ET3-1</strain>
    </source>
</reference>
<protein>
    <recommendedName>
        <fullName evidence="1">Regulatory protein RecX</fullName>
    </recommendedName>
</protein>
<gene>
    <name evidence="1" type="primary">recX</name>
    <name type="ordered locus">SAB1805c</name>
</gene>
<proteinExistence type="inferred from homology"/>
<sequence length="272" mass="32259">MPKITKIEVQKKNKERFNLFLDEQFEMGIDIDTLVKFNLKKGQQLEAADMAEIQKYDHYRIGLNKAIQYLSYKKRTEKEVIQYLQKEEISEQAISEVIEYCYREKLIDHQDYAESLKNTMIRTTDKGPKIYQQKLYQLGIEPNIIEMFTELYREQQELDDIIQIAEKISKTKKGPQNKVKEKVMQSLIQKGFEMETIHAVLNEMDFTQDEAVLDDLLQRDLEKIYNKNRKKYTQQKLISKTIEGLMRKGYKYDKIKAKLEESGIADGTEEIE</sequence>
<name>RECX_STAAB</name>
<organism>
    <name type="scientific">Staphylococcus aureus (strain bovine RF122 / ET3-1)</name>
    <dbReference type="NCBI Taxonomy" id="273036"/>
    <lineage>
        <taxon>Bacteria</taxon>
        <taxon>Bacillati</taxon>
        <taxon>Bacillota</taxon>
        <taxon>Bacilli</taxon>
        <taxon>Bacillales</taxon>
        <taxon>Staphylococcaceae</taxon>
        <taxon>Staphylococcus</taxon>
    </lineage>
</organism>
<dbReference type="EMBL" id="AJ938182">
    <property type="protein sequence ID" value="CAI81494.1"/>
    <property type="molecule type" value="Genomic_DNA"/>
</dbReference>
<dbReference type="RefSeq" id="WP_001124422.1">
    <property type="nucleotide sequence ID" value="NC_007622.1"/>
</dbReference>
<dbReference type="SMR" id="Q2YU14"/>
<dbReference type="KEGG" id="sab:SAB1805c"/>
<dbReference type="HOGENOM" id="CLU_066607_4_0_9"/>
<dbReference type="GO" id="GO:0005737">
    <property type="term" value="C:cytoplasm"/>
    <property type="evidence" value="ECO:0007669"/>
    <property type="project" value="UniProtKB-SubCell"/>
</dbReference>
<dbReference type="GO" id="GO:0006282">
    <property type="term" value="P:regulation of DNA repair"/>
    <property type="evidence" value="ECO:0007669"/>
    <property type="project" value="UniProtKB-UniRule"/>
</dbReference>
<dbReference type="Gene3D" id="1.10.10.10">
    <property type="entry name" value="Winged helix-like DNA-binding domain superfamily/Winged helix DNA-binding domain"/>
    <property type="match status" value="4"/>
</dbReference>
<dbReference type="HAMAP" id="MF_01114">
    <property type="entry name" value="RecX"/>
    <property type="match status" value="1"/>
</dbReference>
<dbReference type="InterPro" id="IPR053926">
    <property type="entry name" value="RecX_HTH_1st"/>
</dbReference>
<dbReference type="InterPro" id="IPR053925">
    <property type="entry name" value="RecX_HTH_3rd"/>
</dbReference>
<dbReference type="InterPro" id="IPR003783">
    <property type="entry name" value="Regulatory_RecX"/>
</dbReference>
<dbReference type="InterPro" id="IPR036388">
    <property type="entry name" value="WH-like_DNA-bd_sf"/>
</dbReference>
<dbReference type="NCBIfam" id="NF010733">
    <property type="entry name" value="PRK14135.1"/>
    <property type="match status" value="1"/>
</dbReference>
<dbReference type="PANTHER" id="PTHR33602">
    <property type="entry name" value="REGULATORY PROTEIN RECX FAMILY PROTEIN"/>
    <property type="match status" value="1"/>
</dbReference>
<dbReference type="PANTHER" id="PTHR33602:SF1">
    <property type="entry name" value="REGULATORY PROTEIN RECX FAMILY PROTEIN"/>
    <property type="match status" value="1"/>
</dbReference>
<dbReference type="Pfam" id="PF21982">
    <property type="entry name" value="RecX_HTH1"/>
    <property type="match status" value="1"/>
</dbReference>
<dbReference type="Pfam" id="PF21981">
    <property type="entry name" value="RecX_HTH3"/>
    <property type="match status" value="1"/>
</dbReference>
<keyword id="KW-0963">Cytoplasm</keyword>
<evidence type="ECO:0000255" key="1">
    <source>
        <dbReference type="HAMAP-Rule" id="MF_01114"/>
    </source>
</evidence>
<accession>Q2YU14</accession>
<feature type="chain" id="PRO_1000065210" description="Regulatory protein RecX">
    <location>
        <begin position="1"/>
        <end position="272"/>
    </location>
</feature>
<comment type="function">
    <text evidence="1">Modulates RecA activity.</text>
</comment>
<comment type="subcellular location">
    <subcellularLocation>
        <location evidence="1">Cytoplasm</location>
    </subcellularLocation>
</comment>
<comment type="similarity">
    <text evidence="1">Belongs to the RecX family.</text>
</comment>